<organism>
    <name type="scientific">Epstein-Barr virus (strain AG876)</name>
    <name type="common">HHV-4</name>
    <name type="synonym">Human herpesvirus 4</name>
    <dbReference type="NCBI Taxonomy" id="82830"/>
    <lineage>
        <taxon>Viruses</taxon>
        <taxon>Duplodnaviria</taxon>
        <taxon>Heunggongvirae</taxon>
        <taxon>Peploviricota</taxon>
        <taxon>Herviviricetes</taxon>
        <taxon>Herpesvirales</taxon>
        <taxon>Orthoherpesviridae</taxon>
        <taxon>Gammaherpesvirinae</taxon>
        <taxon>Lymphocryptovirus</taxon>
        <taxon>Lymphocryptovirus humangamma4</taxon>
        <taxon>Epstein-Barr virus (strain GD1)</taxon>
    </lineage>
</organism>
<accession>P0C6N0</accession>
<accession>Q777A5</accession>
<proteinExistence type="inferred from homology"/>
<keyword id="KW-1015">Disulfide bond</keyword>
<keyword id="KW-0244">Early protein</keyword>
<keyword id="KW-0325">Glycoprotein</keyword>
<keyword id="KW-0393">Immunoglobulin domain</keyword>
<keyword id="KW-0553">Oncogene</keyword>
<keyword id="KW-1185">Reference proteome</keyword>
<keyword id="KW-0677">Repeat</keyword>
<keyword id="KW-0964">Secreted</keyword>
<keyword id="KW-0732">Signal</keyword>
<comment type="function">
    <text evidence="1">Plays diverse functions in immunomodulation and oncogenicity, maybe by acting as a functional receptor for human CSF1. May inhibit interferon secretion from mononuclear cells. Exhibits oncogenic activity in vitro (By similarity).</text>
</comment>
<comment type="subunit">
    <text evidence="1">Homohexamer. Interacts with human CSF1 (By similarity).</text>
</comment>
<comment type="subcellular location">
    <subcellularLocation>
        <location>Secreted</location>
    </subcellularLocation>
    <text evidence="1">Massively secreted in the serum of EBV-induced nasophyryngeal carcinoma patients.</text>
</comment>
<comment type="PTM">
    <text evidence="1">Phosphorylated on serine and threonine by host.</text>
</comment>
<name>BARF1_EBVA8</name>
<protein>
    <recommendedName>
        <fullName>Secreted protein BARF1</fullName>
    </recommendedName>
    <alternativeName>
        <fullName>33 kDa early protein</fullName>
    </alternativeName>
    <alternativeName>
        <fullName>p33</fullName>
    </alternativeName>
</protein>
<feature type="signal peptide" evidence="2">
    <location>
        <begin position="1"/>
        <end position="20"/>
    </location>
</feature>
<feature type="chain" id="PRO_0000116200" description="Secreted protein BARF1">
    <location>
        <begin position="21"/>
        <end position="221"/>
    </location>
</feature>
<feature type="domain" description="Ig-like 1">
    <location>
        <begin position="21"/>
        <end position="120"/>
    </location>
</feature>
<feature type="domain" description="Ig-like 2">
    <location>
        <begin position="124"/>
        <end position="220"/>
    </location>
</feature>
<feature type="glycosylation site" description="N-linked (GlcNAc...) asparagine; by host" evidence="1">
    <location>
        <position position="95"/>
    </location>
</feature>
<feature type="disulfide bond" evidence="3">
    <location>
        <begin position="146"/>
        <end position="201"/>
    </location>
</feature>
<gene>
    <name type="primary">BARF1</name>
</gene>
<organismHost>
    <name type="scientific">Homo sapiens</name>
    <name type="common">Human</name>
    <dbReference type="NCBI Taxonomy" id="9606"/>
</organismHost>
<reference key="1">
    <citation type="journal article" date="2006" name="Virology">
        <title>The genome of Epstein-Barr virus type 2 strain AG876.</title>
        <authorList>
            <person name="Dolan A."/>
            <person name="Addison C."/>
            <person name="Gatherer D."/>
            <person name="Davison A.J."/>
            <person name="McGeoch D.J."/>
        </authorList>
    </citation>
    <scope>NUCLEOTIDE SEQUENCE [LARGE SCALE GENOMIC DNA]</scope>
</reference>
<dbReference type="EMBL" id="DQ279927">
    <property type="protein sequence ID" value="ABB89291.1"/>
    <property type="molecule type" value="Genomic_DNA"/>
</dbReference>
<dbReference type="RefSeq" id="YP_001129512.1">
    <property type="nucleotide sequence ID" value="NC_009334.1"/>
</dbReference>
<dbReference type="RefSeq" id="YP_401719.1">
    <property type="nucleotide sequence ID" value="NC_007605.1"/>
</dbReference>
<dbReference type="SMR" id="P0C6N0"/>
<dbReference type="GlyCosmos" id="P0C6N0">
    <property type="glycosylation" value="1 site, No reported glycans"/>
</dbReference>
<dbReference type="DNASU" id="3783772"/>
<dbReference type="GeneID" id="3783772"/>
<dbReference type="KEGG" id="vg:3783772"/>
<dbReference type="KEGG" id="vg:5176183"/>
<dbReference type="Proteomes" id="UP000007639">
    <property type="component" value="Genome"/>
</dbReference>
<dbReference type="GO" id="GO:0005576">
    <property type="term" value="C:extracellular region"/>
    <property type="evidence" value="ECO:0007669"/>
    <property type="project" value="UniProtKB-SubCell"/>
</dbReference>
<dbReference type="GO" id="GO:0051781">
    <property type="term" value="P:positive regulation of cell division"/>
    <property type="evidence" value="ECO:0000314"/>
    <property type="project" value="CACAO"/>
</dbReference>
<dbReference type="Gene3D" id="2.60.40.10">
    <property type="entry name" value="Immunoglobulins"/>
    <property type="match status" value="2"/>
</dbReference>
<dbReference type="InterPro" id="IPR054777">
    <property type="entry name" value="BARF1_Ig_2"/>
</dbReference>
<dbReference type="InterPro" id="IPR007110">
    <property type="entry name" value="Ig-like_dom"/>
</dbReference>
<dbReference type="InterPro" id="IPR036179">
    <property type="entry name" value="Ig-like_dom_sf"/>
</dbReference>
<dbReference type="InterPro" id="IPR013783">
    <property type="entry name" value="Ig-like_fold"/>
</dbReference>
<dbReference type="Pfam" id="PF22305">
    <property type="entry name" value="BARF1_ig2"/>
    <property type="match status" value="1"/>
</dbReference>
<dbReference type="SUPFAM" id="SSF48726">
    <property type="entry name" value="Immunoglobulin"/>
    <property type="match status" value="2"/>
</dbReference>
<dbReference type="PROSITE" id="PS50835">
    <property type="entry name" value="IG_LIKE"/>
    <property type="match status" value="1"/>
</dbReference>
<evidence type="ECO:0000250" key="1"/>
<evidence type="ECO:0000255" key="2"/>
<evidence type="ECO:0000255" key="3">
    <source>
        <dbReference type="PROSITE-ProRule" id="PRU00114"/>
    </source>
</evidence>
<sequence>MARFIAQLLLLASCVAAGQAVTAFLGERVTLTSYWRRVSLGPEIEVSWFKLGPGEEQVLIGRMHHDVIFIEWPFRGFFDIHRSANTFFLVVTAANISHDGNYLCRMKLGETEVTKQEHLSVVKPLTLSVHSERSQFPDFSVLTVTCTVNAFPHPHVQWLMPEGVEPAPTAANGGVMKEKDGSLSVAVDLSLPKPWHLPVTCVGKNDKEEAHGVYVSGYLSQ</sequence>